<feature type="chain" id="PRO_0000233427" description="Small ribosomal subunit protein uS17A">
    <location>
        <begin position="1"/>
        <end position="89"/>
    </location>
</feature>
<accession>Q8A485</accession>
<reference key="1">
    <citation type="journal article" date="2003" name="Science">
        <title>A genomic view of the human-Bacteroides thetaiotaomicron symbiosis.</title>
        <authorList>
            <person name="Xu J."/>
            <person name="Bjursell M.K."/>
            <person name="Himrod J."/>
            <person name="Deng S."/>
            <person name="Carmichael L.K."/>
            <person name="Chiang H.C."/>
            <person name="Hooper L.V."/>
            <person name="Gordon J.I."/>
        </authorList>
    </citation>
    <scope>NUCLEOTIDE SEQUENCE [LARGE SCALE GENOMIC DNA]</scope>
    <source>
        <strain>ATCC 29148 / DSM 2079 / JCM 5827 / CCUG 10774 / NCTC 10582 / VPI-5482 / E50</strain>
    </source>
</reference>
<sequence length="89" mass="10486">MISLMEARNLRKERTGVVLSNKMEKTITVAAKFKEKHPIYGKFVSKTKKYHAHDEKNECNIGDTVRIMETRPLSKTKRWRLVEIIERAK</sequence>
<organism>
    <name type="scientific">Bacteroides thetaiotaomicron (strain ATCC 29148 / DSM 2079 / JCM 5827 / CCUG 10774 / NCTC 10582 / VPI-5482 / E50)</name>
    <dbReference type="NCBI Taxonomy" id="226186"/>
    <lineage>
        <taxon>Bacteria</taxon>
        <taxon>Pseudomonadati</taxon>
        <taxon>Bacteroidota</taxon>
        <taxon>Bacteroidia</taxon>
        <taxon>Bacteroidales</taxon>
        <taxon>Bacteroidaceae</taxon>
        <taxon>Bacteroides</taxon>
    </lineage>
</organism>
<keyword id="KW-1185">Reference proteome</keyword>
<keyword id="KW-0687">Ribonucleoprotein</keyword>
<keyword id="KW-0689">Ribosomal protein</keyword>
<keyword id="KW-0694">RNA-binding</keyword>
<keyword id="KW-0699">rRNA-binding</keyword>
<comment type="function">
    <text evidence="1">One of the primary rRNA binding proteins, it binds specifically to the 5'-end of 16S ribosomal RNA.</text>
</comment>
<comment type="subunit">
    <text evidence="1">Part of the 30S ribosomal subunit.</text>
</comment>
<comment type="similarity">
    <text evidence="1">Belongs to the universal ribosomal protein uS17 family.</text>
</comment>
<protein>
    <recommendedName>
        <fullName evidence="1">Small ribosomal subunit protein uS17A</fullName>
    </recommendedName>
    <alternativeName>
        <fullName evidence="2">30S ribosomal protein S17 1</fullName>
    </alternativeName>
</protein>
<proteinExistence type="inferred from homology"/>
<gene>
    <name evidence="1" type="primary">rpsQ1</name>
    <name type="ordered locus">BT_2718</name>
</gene>
<evidence type="ECO:0000255" key="1">
    <source>
        <dbReference type="HAMAP-Rule" id="MF_01345"/>
    </source>
</evidence>
<evidence type="ECO:0000305" key="2"/>
<dbReference type="EMBL" id="AE015928">
    <property type="protein sequence ID" value="AAO77824.1"/>
    <property type="molecule type" value="Genomic_DNA"/>
</dbReference>
<dbReference type="RefSeq" id="NP_811630.1">
    <property type="nucleotide sequence ID" value="NC_004663.1"/>
</dbReference>
<dbReference type="SMR" id="Q8A485"/>
<dbReference type="FunCoup" id="Q8A485">
    <property type="interactions" value="404"/>
</dbReference>
<dbReference type="STRING" id="226186.BT_2718"/>
<dbReference type="PaxDb" id="226186-BT_2718"/>
<dbReference type="EnsemblBacteria" id="AAO77824">
    <property type="protein sequence ID" value="AAO77824"/>
    <property type="gene ID" value="BT_2718"/>
</dbReference>
<dbReference type="KEGG" id="bth:BT_2718"/>
<dbReference type="PATRIC" id="fig|226186.12.peg.2761"/>
<dbReference type="eggNOG" id="COG0186">
    <property type="taxonomic scope" value="Bacteria"/>
</dbReference>
<dbReference type="HOGENOM" id="CLU_073626_1_1_10"/>
<dbReference type="InParanoid" id="Q8A485"/>
<dbReference type="OrthoDB" id="9811714at2"/>
<dbReference type="Proteomes" id="UP000001414">
    <property type="component" value="Chromosome"/>
</dbReference>
<dbReference type="GO" id="GO:0022627">
    <property type="term" value="C:cytosolic small ribosomal subunit"/>
    <property type="evidence" value="ECO:0000318"/>
    <property type="project" value="GO_Central"/>
</dbReference>
<dbReference type="GO" id="GO:0019843">
    <property type="term" value="F:rRNA binding"/>
    <property type="evidence" value="ECO:0007669"/>
    <property type="project" value="UniProtKB-UniRule"/>
</dbReference>
<dbReference type="GO" id="GO:0003735">
    <property type="term" value="F:structural constituent of ribosome"/>
    <property type="evidence" value="ECO:0000318"/>
    <property type="project" value="GO_Central"/>
</dbReference>
<dbReference type="GO" id="GO:0006412">
    <property type="term" value="P:translation"/>
    <property type="evidence" value="ECO:0007669"/>
    <property type="project" value="UniProtKB-UniRule"/>
</dbReference>
<dbReference type="CDD" id="cd00364">
    <property type="entry name" value="Ribosomal_uS17"/>
    <property type="match status" value="1"/>
</dbReference>
<dbReference type="FunFam" id="2.40.50.140:FF:000123">
    <property type="entry name" value="30S ribosomal protein S17"/>
    <property type="match status" value="1"/>
</dbReference>
<dbReference type="Gene3D" id="2.40.50.140">
    <property type="entry name" value="Nucleic acid-binding proteins"/>
    <property type="match status" value="1"/>
</dbReference>
<dbReference type="HAMAP" id="MF_01345_B">
    <property type="entry name" value="Ribosomal_uS17_B"/>
    <property type="match status" value="1"/>
</dbReference>
<dbReference type="InterPro" id="IPR012340">
    <property type="entry name" value="NA-bd_OB-fold"/>
</dbReference>
<dbReference type="InterPro" id="IPR000266">
    <property type="entry name" value="Ribosomal_uS17"/>
</dbReference>
<dbReference type="InterPro" id="IPR019984">
    <property type="entry name" value="Ribosomal_uS17_bact/chlr"/>
</dbReference>
<dbReference type="InterPro" id="IPR019979">
    <property type="entry name" value="Ribosomal_uS17_CS"/>
</dbReference>
<dbReference type="NCBIfam" id="NF004123">
    <property type="entry name" value="PRK05610.1"/>
    <property type="match status" value="1"/>
</dbReference>
<dbReference type="NCBIfam" id="TIGR03635">
    <property type="entry name" value="uS17_bact"/>
    <property type="match status" value="1"/>
</dbReference>
<dbReference type="PANTHER" id="PTHR10744">
    <property type="entry name" value="40S RIBOSOMAL PROTEIN S11 FAMILY MEMBER"/>
    <property type="match status" value="1"/>
</dbReference>
<dbReference type="PANTHER" id="PTHR10744:SF1">
    <property type="entry name" value="SMALL RIBOSOMAL SUBUNIT PROTEIN US17M"/>
    <property type="match status" value="1"/>
</dbReference>
<dbReference type="Pfam" id="PF00366">
    <property type="entry name" value="Ribosomal_S17"/>
    <property type="match status" value="1"/>
</dbReference>
<dbReference type="PRINTS" id="PR00973">
    <property type="entry name" value="RIBOSOMALS17"/>
</dbReference>
<dbReference type="SUPFAM" id="SSF50249">
    <property type="entry name" value="Nucleic acid-binding proteins"/>
    <property type="match status" value="1"/>
</dbReference>
<dbReference type="PROSITE" id="PS00056">
    <property type="entry name" value="RIBOSOMAL_S17"/>
    <property type="match status" value="1"/>
</dbReference>
<name>RS171_BACTN</name>